<organism>
    <name type="scientific">Bradyrhizobium diazoefficiens (strain JCM 10833 / BCRC 13528 / IAM 13628 / NBRC 14792 / USDA 110)</name>
    <dbReference type="NCBI Taxonomy" id="224911"/>
    <lineage>
        <taxon>Bacteria</taxon>
        <taxon>Pseudomonadati</taxon>
        <taxon>Pseudomonadota</taxon>
        <taxon>Alphaproteobacteria</taxon>
        <taxon>Hyphomicrobiales</taxon>
        <taxon>Nitrobacteraceae</taxon>
        <taxon>Bradyrhizobium</taxon>
    </lineage>
</organism>
<comment type="function">
    <text evidence="5 6">Cyclic nucleotide synthase (second messenger synthase) of a CBASS antivirus system (Probable) (PubMed:34077735). CBASS (cyclic oligonucleotide-based antiphage signaling system) provides immunity against bacteriophage. The CD-NTase protein synthesizes cyclic nucleotides in response to infection; these serve as specific second messenger signals. The signals activate a diverse range of effectors, leading to bacterial cell death and thus abortive phage infection. A type II-short CBASS system (Probable) (PubMed:32839535).</text>
</comment>
<comment type="function">
    <text evidence="2">Cyclic dinucleotide synthase that catalyzes the synthesis of predominantly 3'3'-cGMP-UMP, followed by 3'3'-cGAMP and c-di-AMP in a reaction mixture of ATP, CTP, GTP and UTP. The cyclic nucleotide products are second messengers that activate the CBASS Cap5 effector nuclease, leading to DNA degradation and probably cell death (PubMed:34077735). Cyclic nucleotides do not activate the effector equally; reactions with ATP/GTP, ATP/UTP and ATP alone activate Cap5, whereas reaction with GTP/UTP (the major in vitro product) do not (PubMed:34077735).</text>
</comment>
<comment type="catalytic activity">
    <reaction evidence="2">
        <text>UTP + GTP = 3',3'-cGMP-UMP + 2 diphosphate</text>
        <dbReference type="Rhea" id="RHEA:77707"/>
        <dbReference type="ChEBI" id="CHEBI:33019"/>
        <dbReference type="ChEBI" id="CHEBI:37565"/>
        <dbReference type="ChEBI" id="CHEBI:46398"/>
        <dbReference type="ChEBI" id="CHEBI:197444"/>
    </reaction>
    <physiologicalReaction direction="left-to-right" evidence="6">
        <dbReference type="Rhea" id="RHEA:77708"/>
    </physiologicalReaction>
</comment>
<comment type="catalytic activity">
    <reaction evidence="2">
        <text>GTP + ATP = 3',3'-cGAMP + 2 diphosphate</text>
        <dbReference type="Rhea" id="RHEA:35647"/>
        <dbReference type="ChEBI" id="CHEBI:30616"/>
        <dbReference type="ChEBI" id="CHEBI:33019"/>
        <dbReference type="ChEBI" id="CHEBI:37565"/>
        <dbReference type="ChEBI" id="CHEBI:71501"/>
    </reaction>
    <physiologicalReaction direction="left-to-right" evidence="6">
        <dbReference type="Rhea" id="RHEA:35648"/>
    </physiologicalReaction>
</comment>
<comment type="catalytic activity">
    <reaction evidence="2">
        <text>2 ATP = 3',3'-c-di-AMP + 2 diphosphate</text>
        <dbReference type="Rhea" id="RHEA:35655"/>
        <dbReference type="ChEBI" id="CHEBI:30616"/>
        <dbReference type="ChEBI" id="CHEBI:33019"/>
        <dbReference type="ChEBI" id="CHEBI:71500"/>
        <dbReference type="EC" id="2.7.7.85"/>
    </reaction>
    <physiologicalReaction direction="left-to-right" evidence="6">
        <dbReference type="Rhea" id="RHEA:35656"/>
    </physiologicalReaction>
</comment>
<comment type="cofactor">
    <cofactor evidence="2">
        <name>Mg(2+)</name>
        <dbReference type="ChEBI" id="CHEBI:18420"/>
    </cofactor>
    <text evidence="2 8">Binds at least 1 Mg(2+) ion per subunit.</text>
</comment>
<comment type="similarity">
    <text evidence="6">Belongs to the CD-NTase family. G10 subfamily.</text>
</comment>
<reference evidence="7" key="1">
    <citation type="journal article" date="2002" name="DNA Res.">
        <title>Complete genomic sequence of nitrogen-fixing symbiotic bacterium Bradyrhizobium japonicum USDA110.</title>
        <authorList>
            <person name="Kaneko T."/>
            <person name="Nakamura Y."/>
            <person name="Sato S."/>
            <person name="Minamisawa K."/>
            <person name="Uchiumi T."/>
            <person name="Sasamoto S."/>
            <person name="Watanabe A."/>
            <person name="Idesawa K."/>
            <person name="Iriguchi M."/>
            <person name="Kawashima K."/>
            <person name="Kohara M."/>
            <person name="Matsumoto M."/>
            <person name="Shimpo S."/>
            <person name="Tsuruoka H."/>
            <person name="Wada T."/>
            <person name="Yamada M."/>
            <person name="Tabata S."/>
        </authorList>
    </citation>
    <scope>NUCLEOTIDE SEQUENCE [LARGE SCALE GENOMIC DNA]</scope>
    <source>
        <strain>JCM 10833 / BCRC 13528 / IAM 13628 / NBRC 14792 / USDA 110</strain>
    </source>
</reference>
<reference key="2">
    <citation type="journal article" date="2020" name="Nat. Microbiol.">
        <title>Diversity and classification of cyclic-oligonucleotide-based anti-phage signalling systems.</title>
        <authorList>
            <person name="Millman A."/>
            <person name="Melamed S."/>
            <person name="Amitai G."/>
            <person name="Sorek R."/>
        </authorList>
    </citation>
    <scope>CLASSIFICATION AND NOMENCLATURE</scope>
</reference>
<reference evidence="9" key="3">
    <citation type="journal article" date="2021" name="Cell Rep.">
        <title>Molecular basis of CD-NTase nucleotide selection in CBASS anti-phage defense.</title>
        <authorList>
            <person name="Govande A.A."/>
            <person name="Duncan-Lowey B."/>
            <person name="Eaglesham J.B."/>
            <person name="Whiteley A.T."/>
            <person name="Kranzusch P.J."/>
        </authorList>
    </citation>
    <scope>X-RAY CRYSTALLOGRAPHY (1.60 ANGSTROMS) OF 2-416 IN COMPLEX WITH GTP AND MAGNESIUM</scope>
    <scope>FUNCTION</scope>
    <scope>CATALYTIC ACTIVITY</scope>
    <scope>COFACTOR</scope>
</reference>
<name>CDNG_BRADU</name>
<gene>
    <name evidence="3" type="primary">cdnG</name>
    <name evidence="7" type="ordered locus">blr0072</name>
</gene>
<feature type="chain" id="PRO_0000459387" description="Cyclic dinucleotide synthase CdnG">
    <location>
        <begin position="1"/>
        <end position="416"/>
    </location>
</feature>
<feature type="region of interest" description="Disordered" evidence="1">
    <location>
        <begin position="145"/>
        <end position="167"/>
    </location>
</feature>
<feature type="compositionally biased region" description="Basic and acidic residues" evidence="1">
    <location>
        <begin position="150"/>
        <end position="167"/>
    </location>
</feature>
<feature type="active site" evidence="6">
    <location>
        <position position="89"/>
    </location>
</feature>
<feature type="active site" evidence="6">
    <location>
        <position position="91"/>
    </location>
</feature>
<feature type="active site" evidence="6">
    <location>
        <position position="140"/>
    </location>
</feature>
<feature type="binding site" evidence="2 8">
    <location>
        <position position="72"/>
    </location>
    <ligand>
        <name>GTP</name>
        <dbReference type="ChEBI" id="CHEBI:37565"/>
    </ligand>
</feature>
<feature type="binding site" evidence="2 8">
    <location>
        <position position="91"/>
    </location>
    <ligand>
        <name>GTP</name>
        <dbReference type="ChEBI" id="CHEBI:37565"/>
    </ligand>
</feature>
<feature type="binding site" evidence="2 8">
    <location>
        <position position="91"/>
    </location>
    <ligand>
        <name>Mg(2+)</name>
        <dbReference type="ChEBI" id="CHEBI:18420"/>
    </ligand>
</feature>
<feature type="binding site" evidence="2 8">
    <location>
        <position position="236"/>
    </location>
    <ligand>
        <name>GTP</name>
        <dbReference type="ChEBI" id="CHEBI:37565"/>
    </ligand>
</feature>
<feature type="binding site" evidence="2 8">
    <location>
        <position position="253"/>
    </location>
    <ligand>
        <name>GTP</name>
        <dbReference type="ChEBI" id="CHEBI:37565"/>
    </ligand>
</feature>
<feature type="binding site" evidence="2 8">
    <location>
        <position position="305"/>
    </location>
    <ligand>
        <name>GTP</name>
        <dbReference type="ChEBI" id="CHEBI:37565"/>
    </ligand>
</feature>
<feature type="binding site" evidence="2 8">
    <location>
        <position position="306"/>
    </location>
    <ligand>
        <name>GTP</name>
        <dbReference type="ChEBI" id="CHEBI:37565"/>
    </ligand>
</feature>
<feature type="binding site" evidence="2 8">
    <location>
        <position position="309"/>
    </location>
    <ligand>
        <name>GTP</name>
        <dbReference type="ChEBI" id="CHEBI:37565"/>
    </ligand>
</feature>
<feature type="site" description="Important for nucleotide discrimination" evidence="6">
    <location>
        <position position="70"/>
    </location>
</feature>
<feature type="helix" evidence="10">
    <location>
        <begin position="20"/>
        <end position="30"/>
    </location>
</feature>
<feature type="helix" evidence="10">
    <location>
        <begin position="36"/>
        <end position="39"/>
    </location>
</feature>
<feature type="helix" evidence="10">
    <location>
        <begin position="42"/>
        <end position="53"/>
    </location>
</feature>
<feature type="turn" evidence="10">
    <location>
        <begin position="59"/>
        <end position="62"/>
    </location>
</feature>
<feature type="strand" evidence="10">
    <location>
        <begin position="64"/>
        <end position="69"/>
    </location>
</feature>
<feature type="helix" evidence="10">
    <location>
        <begin position="71"/>
        <end position="74"/>
    </location>
</feature>
<feature type="strand" evidence="10">
    <location>
        <begin position="88"/>
        <end position="96"/>
    </location>
</feature>
<feature type="helix" evidence="10">
    <location>
        <begin position="103"/>
        <end position="113"/>
    </location>
</feature>
<feature type="turn" evidence="10">
    <location>
        <begin position="114"/>
        <end position="116"/>
    </location>
</feature>
<feature type="strand" evidence="10">
    <location>
        <begin position="118"/>
        <end position="124"/>
    </location>
</feature>
<feature type="strand" evidence="10">
    <location>
        <begin position="129"/>
        <end position="132"/>
    </location>
</feature>
<feature type="strand" evidence="10">
    <location>
        <begin position="136"/>
        <end position="146"/>
    </location>
</feature>
<feature type="strand" evidence="10">
    <location>
        <begin position="148"/>
        <end position="150"/>
    </location>
</feature>
<feature type="strand" evidence="10">
    <location>
        <begin position="154"/>
        <end position="158"/>
    </location>
</feature>
<feature type="strand" evidence="10">
    <location>
        <begin position="169"/>
        <end position="173"/>
    </location>
</feature>
<feature type="helix" evidence="10">
    <location>
        <begin position="175"/>
        <end position="185"/>
    </location>
</feature>
<feature type="helix" evidence="10">
    <location>
        <begin position="190"/>
        <end position="203"/>
    </location>
</feature>
<feature type="helix" evidence="10">
    <location>
        <begin position="213"/>
        <end position="215"/>
    </location>
</feature>
<feature type="helix" evidence="10">
    <location>
        <begin position="227"/>
        <end position="242"/>
    </location>
</feature>
<feature type="turn" evidence="10">
    <location>
        <begin position="243"/>
        <end position="245"/>
    </location>
</feature>
<feature type="helix" evidence="10">
    <location>
        <begin position="253"/>
        <end position="263"/>
    </location>
</feature>
<feature type="helix" evidence="10">
    <location>
        <begin position="270"/>
        <end position="290"/>
    </location>
</feature>
<feature type="strand" evidence="10">
    <location>
        <begin position="302"/>
        <end position="306"/>
    </location>
</feature>
<feature type="strand" evidence="10">
    <location>
        <begin position="309"/>
        <end position="311"/>
    </location>
</feature>
<feature type="helix" evidence="10">
    <location>
        <begin position="315"/>
        <end position="336"/>
    </location>
</feature>
<feature type="helix" evidence="10">
    <location>
        <begin position="343"/>
        <end position="353"/>
    </location>
</feature>
<feature type="helix" evidence="10">
    <location>
        <begin position="355"/>
        <end position="366"/>
    </location>
</feature>
<keyword id="KW-0002">3D-structure</keyword>
<keyword id="KW-0051">Antiviral defense</keyword>
<keyword id="KW-0067">ATP-binding</keyword>
<keyword id="KW-0342">GTP-binding</keyword>
<keyword id="KW-0460">Magnesium</keyword>
<keyword id="KW-0479">Metal-binding</keyword>
<keyword id="KW-0546">Nucleotide metabolism</keyword>
<keyword id="KW-0547">Nucleotide-binding</keyword>
<keyword id="KW-0548">Nucleotidyltransferase</keyword>
<keyword id="KW-1185">Reference proteome</keyword>
<keyword id="KW-0808">Transferase</keyword>
<proteinExistence type="evidence at protein level"/>
<protein>
    <recommendedName>
        <fullName evidence="3">Cyclic dinucleotide synthase CdnG</fullName>
        <shortName evidence="3">BdCdnG</shortName>
    </recommendedName>
    <alternativeName>
        <fullName evidence="4">Cyclic GMP-AMP synthase</fullName>
        <shortName evidence="4">cGAMP synthase</shortName>
    </alternativeName>
    <alternativeName>
        <fullName evidence="4">Cyclic GMP-UMP synthase</fullName>
        <shortName evidence="4">cGMP-UMP synthase</shortName>
    </alternativeName>
    <alternativeName>
        <fullName evidence="4">c-di-AMP synthase</fullName>
        <ecNumber evidence="2">2.7.7.85</ecNumber>
    </alternativeName>
</protein>
<accession>Q89Y83</accession>
<evidence type="ECO:0000256" key="1">
    <source>
        <dbReference type="SAM" id="MobiDB-lite"/>
    </source>
</evidence>
<evidence type="ECO:0000269" key="2">
    <source>
    </source>
</evidence>
<evidence type="ECO:0000303" key="3">
    <source>
    </source>
</evidence>
<evidence type="ECO:0000305" key="4"/>
<evidence type="ECO:0000305" key="5">
    <source>
    </source>
</evidence>
<evidence type="ECO:0000305" key="6">
    <source>
    </source>
</evidence>
<evidence type="ECO:0000312" key="7">
    <source>
        <dbReference type="EMBL" id="BAC45337.1"/>
    </source>
</evidence>
<evidence type="ECO:0000312" key="8">
    <source>
        <dbReference type="PDB" id="7LJN"/>
    </source>
</evidence>
<evidence type="ECO:0007744" key="9">
    <source>
        <dbReference type="PDB" id="7LJN"/>
    </source>
</evidence>
<evidence type="ECO:0007829" key="10">
    <source>
        <dbReference type="PDB" id="7LJN"/>
    </source>
</evidence>
<sequence length="416" mass="46269">MSNFPSLRRDDRPDDPFADPLDAVLAELAINIQLPPGLHAKAVERYEAVRRYIERPGSPLEGRVACFYPQGSMAIDATTSTRGTDDEYDLDIVAEIEGPDLGPEALLDDLEAALESYPVSKVVRQTRCITLYYADGMHLDITPSRRRAPKEKEGEIPHAKKGTRSDPARYVPMNSYAFGKWYCARTPTEERFALALNRQLYEQAGIAFAAADVEDVPPQTPLIIKSVTTVALQLIKRHRNIAYATETGRIPPSVMLSCHAGHAARPGMRLAEMLIRQARWTARAIDDAAKRGQLLVVPNPEFPVERFTDRWPESQLQQTTYSRHLHTLANGLEAARTGDVQLEDLQEWLRGQFGDRVVTRSVKAFNQRLGRQVQSRQHGYTRSGGLFVPAAPAIIGAATSLAPVAARAHTNMGERR</sequence>
<dbReference type="EC" id="2.7.7.85" evidence="2"/>
<dbReference type="EMBL" id="BA000040">
    <property type="protein sequence ID" value="BAC45337.1"/>
    <property type="molecule type" value="Genomic_DNA"/>
</dbReference>
<dbReference type="RefSeq" id="NP_766712.1">
    <property type="nucleotide sequence ID" value="NC_004463.1"/>
</dbReference>
<dbReference type="RefSeq" id="WP_011082904.1">
    <property type="nucleotide sequence ID" value="NZ_CP011360.1"/>
</dbReference>
<dbReference type="PDB" id="7LJN">
    <property type="method" value="X-ray"/>
    <property type="resolution" value="1.60 A"/>
    <property type="chains" value="A/B/C/D=2-416"/>
</dbReference>
<dbReference type="PDBsum" id="7LJN"/>
<dbReference type="SMR" id="Q89Y83"/>
<dbReference type="STRING" id="224911.AAV28_39610"/>
<dbReference type="EnsemblBacteria" id="BAC45337">
    <property type="protein sequence ID" value="BAC45337"/>
    <property type="gene ID" value="BAC45337"/>
</dbReference>
<dbReference type="KEGG" id="bja:blr0072"/>
<dbReference type="PATRIC" id="fig|224911.44.peg.8579"/>
<dbReference type="eggNOG" id="ENOG502ZAFG">
    <property type="taxonomic scope" value="Bacteria"/>
</dbReference>
<dbReference type="HOGENOM" id="CLU_658376_0_0_5"/>
<dbReference type="InParanoid" id="Q89Y83"/>
<dbReference type="OrthoDB" id="1118920at2"/>
<dbReference type="PhylomeDB" id="Q89Y83"/>
<dbReference type="Proteomes" id="UP000002526">
    <property type="component" value="Chromosome"/>
</dbReference>
<dbReference type="GO" id="GO:0005524">
    <property type="term" value="F:ATP binding"/>
    <property type="evidence" value="ECO:0007669"/>
    <property type="project" value="UniProtKB-KW"/>
</dbReference>
<dbReference type="GO" id="GO:0005525">
    <property type="term" value="F:GTP binding"/>
    <property type="evidence" value="ECO:0007669"/>
    <property type="project" value="UniProtKB-KW"/>
</dbReference>
<dbReference type="GO" id="GO:0046872">
    <property type="term" value="F:metal ion binding"/>
    <property type="evidence" value="ECO:0007669"/>
    <property type="project" value="UniProtKB-KW"/>
</dbReference>
<dbReference type="GO" id="GO:0016779">
    <property type="term" value="F:nucleotidyltransferase activity"/>
    <property type="evidence" value="ECO:0007669"/>
    <property type="project" value="UniProtKB-KW"/>
</dbReference>
<dbReference type="GO" id="GO:0051607">
    <property type="term" value="P:defense response to virus"/>
    <property type="evidence" value="ECO:0007669"/>
    <property type="project" value="UniProtKB-KW"/>
</dbReference>
<dbReference type="GO" id="GO:0009117">
    <property type="term" value="P:nucleotide metabolic process"/>
    <property type="evidence" value="ECO:0007669"/>
    <property type="project" value="UniProtKB-KW"/>
</dbReference>
<dbReference type="CDD" id="cd05400">
    <property type="entry name" value="NT_2-5OAS_ClassI-CCAase"/>
    <property type="match status" value="1"/>
</dbReference>
<dbReference type="InterPro" id="IPR006116">
    <property type="entry name" value="NT_2-5OAS_ClassI-CCAase"/>
</dbReference>
<dbReference type="Pfam" id="PF18144">
    <property type="entry name" value="SMODS"/>
    <property type="match status" value="1"/>
</dbReference>